<keyword id="KW-0687">Ribonucleoprotein</keyword>
<keyword id="KW-0689">Ribosomal protein</keyword>
<evidence type="ECO:0000255" key="1">
    <source>
        <dbReference type="HAMAP-Rule" id="MF_00373"/>
    </source>
</evidence>
<evidence type="ECO:0000256" key="2">
    <source>
        <dbReference type="SAM" id="MobiDB-lite"/>
    </source>
</evidence>
<evidence type="ECO:0000305" key="3"/>
<comment type="similarity">
    <text evidence="1">Belongs to the bacterial ribosomal protein bL28 family.</text>
</comment>
<sequence length="78" mass="9018">MSRVCQVTGKRPAVGNNRSHARNATKRRFLPNLQTHRFWVESEKRFVKLRLTAKGMRIIDKKGIDVVLADMRARGENV</sequence>
<dbReference type="EMBL" id="BA000037">
    <property type="protein sequence ID" value="BAC93050.1"/>
    <property type="molecule type" value="Genomic_DNA"/>
</dbReference>
<dbReference type="RefSeq" id="WP_011078894.1">
    <property type="nucleotide sequence ID" value="NC_005139.1"/>
</dbReference>
<dbReference type="SMR" id="Q7MPS6"/>
<dbReference type="STRING" id="672.VV93_v1c02780"/>
<dbReference type="GeneID" id="95678426"/>
<dbReference type="KEGG" id="vvy:VV0286"/>
<dbReference type="eggNOG" id="COG0227">
    <property type="taxonomic scope" value="Bacteria"/>
</dbReference>
<dbReference type="HOGENOM" id="CLU_064548_3_1_6"/>
<dbReference type="Proteomes" id="UP000002675">
    <property type="component" value="Chromosome I"/>
</dbReference>
<dbReference type="GO" id="GO:0022625">
    <property type="term" value="C:cytosolic large ribosomal subunit"/>
    <property type="evidence" value="ECO:0007669"/>
    <property type="project" value="TreeGrafter"/>
</dbReference>
<dbReference type="GO" id="GO:0003735">
    <property type="term" value="F:structural constituent of ribosome"/>
    <property type="evidence" value="ECO:0007669"/>
    <property type="project" value="InterPro"/>
</dbReference>
<dbReference type="GO" id="GO:0006412">
    <property type="term" value="P:translation"/>
    <property type="evidence" value="ECO:0007669"/>
    <property type="project" value="UniProtKB-UniRule"/>
</dbReference>
<dbReference type="FunFam" id="2.30.170.40:FF:000001">
    <property type="entry name" value="50S ribosomal protein L28"/>
    <property type="match status" value="1"/>
</dbReference>
<dbReference type="Gene3D" id="2.30.170.40">
    <property type="entry name" value="Ribosomal protein L28/L24"/>
    <property type="match status" value="1"/>
</dbReference>
<dbReference type="HAMAP" id="MF_00373">
    <property type="entry name" value="Ribosomal_bL28"/>
    <property type="match status" value="1"/>
</dbReference>
<dbReference type="InterPro" id="IPR026569">
    <property type="entry name" value="Ribosomal_bL28"/>
</dbReference>
<dbReference type="InterPro" id="IPR034704">
    <property type="entry name" value="Ribosomal_bL28/bL31-like_sf"/>
</dbReference>
<dbReference type="InterPro" id="IPR001383">
    <property type="entry name" value="Ribosomal_bL28_bact-type"/>
</dbReference>
<dbReference type="InterPro" id="IPR037147">
    <property type="entry name" value="Ribosomal_bL28_sf"/>
</dbReference>
<dbReference type="NCBIfam" id="TIGR00009">
    <property type="entry name" value="L28"/>
    <property type="match status" value="1"/>
</dbReference>
<dbReference type="PANTHER" id="PTHR13528">
    <property type="entry name" value="39S RIBOSOMAL PROTEIN L28, MITOCHONDRIAL"/>
    <property type="match status" value="1"/>
</dbReference>
<dbReference type="PANTHER" id="PTHR13528:SF2">
    <property type="entry name" value="LARGE RIBOSOMAL SUBUNIT PROTEIN BL28M"/>
    <property type="match status" value="1"/>
</dbReference>
<dbReference type="Pfam" id="PF00830">
    <property type="entry name" value="Ribosomal_L28"/>
    <property type="match status" value="1"/>
</dbReference>
<dbReference type="SUPFAM" id="SSF143800">
    <property type="entry name" value="L28p-like"/>
    <property type="match status" value="1"/>
</dbReference>
<organism>
    <name type="scientific">Vibrio vulnificus (strain YJ016)</name>
    <dbReference type="NCBI Taxonomy" id="196600"/>
    <lineage>
        <taxon>Bacteria</taxon>
        <taxon>Pseudomonadati</taxon>
        <taxon>Pseudomonadota</taxon>
        <taxon>Gammaproteobacteria</taxon>
        <taxon>Vibrionales</taxon>
        <taxon>Vibrionaceae</taxon>
        <taxon>Vibrio</taxon>
    </lineage>
</organism>
<name>RL28_VIBVY</name>
<gene>
    <name evidence="1" type="primary">rpmB</name>
    <name type="ordered locus">VV0286</name>
</gene>
<accession>Q7MPS6</accession>
<protein>
    <recommendedName>
        <fullName evidence="1">Large ribosomal subunit protein bL28</fullName>
    </recommendedName>
    <alternativeName>
        <fullName evidence="3">50S ribosomal protein L28</fullName>
    </alternativeName>
</protein>
<proteinExistence type="inferred from homology"/>
<reference key="1">
    <citation type="journal article" date="2003" name="Genome Res.">
        <title>Comparative genome analysis of Vibrio vulnificus, a marine pathogen.</title>
        <authorList>
            <person name="Chen C.-Y."/>
            <person name="Wu K.-M."/>
            <person name="Chang Y.-C."/>
            <person name="Chang C.-H."/>
            <person name="Tsai H.-C."/>
            <person name="Liao T.-L."/>
            <person name="Liu Y.-M."/>
            <person name="Chen H.-J."/>
            <person name="Shen A.B.-T."/>
            <person name="Li J.-C."/>
            <person name="Su T.-L."/>
            <person name="Shao C.-P."/>
            <person name="Lee C.-T."/>
            <person name="Hor L.-I."/>
            <person name="Tsai S.-F."/>
        </authorList>
    </citation>
    <scope>NUCLEOTIDE SEQUENCE [LARGE SCALE GENOMIC DNA]</scope>
    <source>
        <strain>YJ016</strain>
    </source>
</reference>
<feature type="chain" id="PRO_0000178588" description="Large ribosomal subunit protein bL28">
    <location>
        <begin position="1"/>
        <end position="78"/>
    </location>
</feature>
<feature type="region of interest" description="Disordered" evidence="2">
    <location>
        <begin position="1"/>
        <end position="25"/>
    </location>
</feature>